<feature type="chain" id="PRO_1000064784" description="Ribosome maturation factor RimP">
    <location>
        <begin position="1"/>
        <end position="178"/>
    </location>
</feature>
<protein>
    <recommendedName>
        <fullName evidence="1">Ribosome maturation factor RimP</fullName>
    </recommendedName>
</protein>
<accession>Q1J5B0</accession>
<sequence>MDSQGPIILEKSIKIEEVIKIAITSIIDIVTKTVTPEIKAPYELVDVEYDKMGSDYILSILVDKEGGITVEDTSDLTNIISPLLDTIDPDPFPNQYMLEVSSPGLERPLKTADSLKAAVGSYINVSLYQAIDKVKVFQGDLLAFDGETLTIDYLDKTRHKIVNIPYQAVAKVRMAVKL</sequence>
<evidence type="ECO:0000255" key="1">
    <source>
        <dbReference type="HAMAP-Rule" id="MF_01077"/>
    </source>
</evidence>
<keyword id="KW-0963">Cytoplasm</keyword>
<keyword id="KW-0690">Ribosome biogenesis</keyword>
<comment type="function">
    <text evidence="1">Required for maturation of 30S ribosomal subunits.</text>
</comment>
<comment type="subcellular location">
    <subcellularLocation>
        <location evidence="1">Cytoplasm</location>
    </subcellularLocation>
</comment>
<comment type="similarity">
    <text evidence="1">Belongs to the RimP family.</text>
</comment>
<name>RIMP_STRPF</name>
<proteinExistence type="inferred from homology"/>
<organism>
    <name type="scientific">Streptococcus pyogenes serotype M4 (strain MGAS10750)</name>
    <dbReference type="NCBI Taxonomy" id="370554"/>
    <lineage>
        <taxon>Bacteria</taxon>
        <taxon>Bacillati</taxon>
        <taxon>Bacillota</taxon>
        <taxon>Bacilli</taxon>
        <taxon>Lactobacillales</taxon>
        <taxon>Streptococcaceae</taxon>
        <taxon>Streptococcus</taxon>
    </lineage>
</organism>
<dbReference type="EMBL" id="CP000262">
    <property type="protein sequence ID" value="ABF38476.1"/>
    <property type="molecule type" value="Genomic_DNA"/>
</dbReference>
<dbReference type="SMR" id="Q1J5B0"/>
<dbReference type="KEGG" id="spi:MGAS10750_Spy1526"/>
<dbReference type="HOGENOM" id="CLU_070525_2_0_9"/>
<dbReference type="Proteomes" id="UP000002434">
    <property type="component" value="Chromosome"/>
</dbReference>
<dbReference type="GO" id="GO:0005829">
    <property type="term" value="C:cytosol"/>
    <property type="evidence" value="ECO:0007669"/>
    <property type="project" value="TreeGrafter"/>
</dbReference>
<dbReference type="GO" id="GO:0000028">
    <property type="term" value="P:ribosomal small subunit assembly"/>
    <property type="evidence" value="ECO:0007669"/>
    <property type="project" value="TreeGrafter"/>
</dbReference>
<dbReference type="GO" id="GO:0006412">
    <property type="term" value="P:translation"/>
    <property type="evidence" value="ECO:0007669"/>
    <property type="project" value="TreeGrafter"/>
</dbReference>
<dbReference type="CDD" id="cd01734">
    <property type="entry name" value="YlxS_C"/>
    <property type="match status" value="1"/>
</dbReference>
<dbReference type="Gene3D" id="2.30.30.180">
    <property type="entry name" value="Ribosome maturation factor RimP, C-terminal domain"/>
    <property type="match status" value="1"/>
</dbReference>
<dbReference type="Gene3D" id="3.30.300.70">
    <property type="entry name" value="RimP-like superfamily, N-terminal"/>
    <property type="match status" value="1"/>
</dbReference>
<dbReference type="HAMAP" id="MF_01077">
    <property type="entry name" value="RimP"/>
    <property type="match status" value="1"/>
</dbReference>
<dbReference type="InterPro" id="IPR003728">
    <property type="entry name" value="Ribosome_maturation_RimP"/>
</dbReference>
<dbReference type="InterPro" id="IPR028998">
    <property type="entry name" value="RimP_C"/>
</dbReference>
<dbReference type="InterPro" id="IPR036847">
    <property type="entry name" value="RimP_C_sf"/>
</dbReference>
<dbReference type="InterPro" id="IPR028989">
    <property type="entry name" value="RimP_N"/>
</dbReference>
<dbReference type="InterPro" id="IPR035956">
    <property type="entry name" value="RimP_N_sf"/>
</dbReference>
<dbReference type="NCBIfam" id="NF000928">
    <property type="entry name" value="PRK00092.1-2"/>
    <property type="match status" value="1"/>
</dbReference>
<dbReference type="PANTHER" id="PTHR33867">
    <property type="entry name" value="RIBOSOME MATURATION FACTOR RIMP"/>
    <property type="match status" value="1"/>
</dbReference>
<dbReference type="PANTHER" id="PTHR33867:SF1">
    <property type="entry name" value="RIBOSOME MATURATION FACTOR RIMP"/>
    <property type="match status" value="1"/>
</dbReference>
<dbReference type="Pfam" id="PF17384">
    <property type="entry name" value="DUF150_C"/>
    <property type="match status" value="1"/>
</dbReference>
<dbReference type="Pfam" id="PF02576">
    <property type="entry name" value="RimP_N"/>
    <property type="match status" value="1"/>
</dbReference>
<dbReference type="SUPFAM" id="SSF74942">
    <property type="entry name" value="YhbC-like, C-terminal domain"/>
    <property type="match status" value="1"/>
</dbReference>
<dbReference type="SUPFAM" id="SSF75420">
    <property type="entry name" value="YhbC-like, N-terminal domain"/>
    <property type="match status" value="1"/>
</dbReference>
<gene>
    <name evidence="1" type="primary">rimP</name>
    <name type="ordered locus">MGAS10750_Spy1526</name>
</gene>
<reference key="1">
    <citation type="journal article" date="2006" name="Proc. Natl. Acad. Sci. U.S.A.">
        <title>Molecular genetic anatomy of inter- and intraserotype variation in the human bacterial pathogen group A Streptococcus.</title>
        <authorList>
            <person name="Beres S.B."/>
            <person name="Richter E.W."/>
            <person name="Nagiec M.J."/>
            <person name="Sumby P."/>
            <person name="Porcella S.F."/>
            <person name="DeLeo F.R."/>
            <person name="Musser J.M."/>
        </authorList>
    </citation>
    <scope>NUCLEOTIDE SEQUENCE [LARGE SCALE GENOMIC DNA]</scope>
    <source>
        <strain>MGAS10750</strain>
    </source>
</reference>